<comment type="function">
    <text evidence="1">Possesses antifungal activity against P.infestans but not F.graminearum.</text>
</comment>
<comment type="biophysicochemical properties">
    <temperatureDependence>
        <text>Thermostable. Still active after heating at 100 degrees Celsius for 20 minutes.</text>
    </temperatureDependence>
</comment>
<comment type="subcellular location">
    <subcellularLocation>
        <location>Secreted</location>
    </subcellularLocation>
</comment>
<comment type="miscellaneous">
    <text>Antimicrobial activity is not affected by salt concentration.</text>
</comment>
<proteinExistence type="evidence at protein level"/>
<feature type="chain" id="PRO_0000064483" description="Antifungal protein 4">
    <location>
        <begin position="1"/>
        <end position="37" status="greater than"/>
    </location>
</feature>
<feature type="non-terminal residue" evidence="2">
    <location>
        <position position="37"/>
    </location>
</feature>
<dbReference type="GO" id="GO:0005576">
    <property type="term" value="C:extracellular region"/>
    <property type="evidence" value="ECO:0007669"/>
    <property type="project" value="UniProtKB-SubCell"/>
</dbReference>
<dbReference type="GO" id="GO:0042742">
    <property type="term" value="P:defense response to bacterium"/>
    <property type="evidence" value="ECO:0007669"/>
    <property type="project" value="UniProtKB-KW"/>
</dbReference>
<dbReference type="GO" id="GO:0050832">
    <property type="term" value="P:defense response to fungus"/>
    <property type="evidence" value="ECO:0000314"/>
    <property type="project" value="UniProtKB"/>
</dbReference>
<dbReference type="GO" id="GO:0031640">
    <property type="term" value="P:killing of cells of another organism"/>
    <property type="evidence" value="ECO:0007669"/>
    <property type="project" value="UniProtKB-KW"/>
</dbReference>
<dbReference type="GO" id="GO:0006805">
    <property type="term" value="P:xenobiotic metabolic process"/>
    <property type="evidence" value="ECO:0000314"/>
    <property type="project" value="UniProtKB"/>
</dbReference>
<sequence>DRQIDMEEQQLEKLNKQDRXPGLRYAAKQQMXTXRMG</sequence>
<accession>P83138</accession>
<name>AFP4_MALPA</name>
<organism evidence="3">
    <name type="scientific">Malva parviflora</name>
    <name type="common">Little mallow</name>
    <name type="synonym">Cheeseweed mallow</name>
    <dbReference type="NCBI Taxonomy" id="145753"/>
    <lineage>
        <taxon>Eukaryota</taxon>
        <taxon>Viridiplantae</taxon>
        <taxon>Streptophyta</taxon>
        <taxon>Embryophyta</taxon>
        <taxon>Tracheophyta</taxon>
        <taxon>Spermatophyta</taxon>
        <taxon>Magnoliopsida</taxon>
        <taxon>eudicotyledons</taxon>
        <taxon>Gunneridae</taxon>
        <taxon>Pentapetalae</taxon>
        <taxon>rosids</taxon>
        <taxon>malvids</taxon>
        <taxon>Malvales</taxon>
        <taxon>Malvaceae</taxon>
        <taxon>Malvoideae</taxon>
        <taxon>Malva</taxon>
    </lineage>
</organism>
<evidence type="ECO:0000269" key="1">
    <source>
    </source>
</evidence>
<evidence type="ECO:0000303" key="2">
    <source>
    </source>
</evidence>
<evidence type="ECO:0000305" key="3"/>
<reference evidence="3" key="1">
    <citation type="journal article" date="2001" name="Biochem. Biophys. Res. Commun.">
        <title>Purification and characterization of three antifungal proteins from cheeseweed (Malva parviflora).</title>
        <authorList>
            <person name="Wang X."/>
            <person name="Bunkers G.J."/>
            <person name="Walters M.R."/>
            <person name="Thoma R.S."/>
        </authorList>
    </citation>
    <scope>PROTEIN SEQUENCE</scope>
    <scope>FUNCTION</scope>
    <source>
        <tissue>Seed</tissue>
    </source>
</reference>
<protein>
    <recommendedName>
        <fullName>Antifungal protein 4</fullName>
    </recommendedName>
    <alternativeName>
        <fullName>CW-4</fullName>
    </alternativeName>
</protein>
<keyword id="KW-0044">Antibiotic</keyword>
<keyword id="KW-0929">Antimicrobial</keyword>
<keyword id="KW-0903">Direct protein sequencing</keyword>
<keyword id="KW-0295">Fungicide</keyword>
<keyword id="KW-0964">Secreted</keyword>